<name>RPS6R_ARATH</name>
<keyword id="KW-0007">Acetylation</keyword>
<keyword id="KW-0025">Alternative splicing</keyword>
<keyword id="KW-0378">Hydrolase</keyword>
<keyword id="KW-0433">Leucine-rich repeat</keyword>
<keyword id="KW-0520">NAD</keyword>
<keyword id="KW-0611">Plant defense</keyword>
<keyword id="KW-0677">Repeat</keyword>
<reference key="1">
    <citation type="journal article" date="2009" name="Plant Physiol.">
        <title>Resistance to the Pseudomonas syringae effector HopA1 is governed by the TIR-NBS-LRR protein RPS6 and is enhanced by mutations in SRFR1.</title>
        <authorList>
            <person name="Kim S.H."/>
            <person name="Kwon S.I."/>
            <person name="Saha D."/>
            <person name="Anyanwu N.C."/>
            <person name="Gassmann W."/>
        </authorList>
    </citation>
    <scope>NUCLEOTIDE SEQUENCE [MRNA]</scope>
    <scope>FUNCTION</scope>
    <scope>ALTERNATIVE SPLICING</scope>
    <scope>MUTAGENESIS OF GLY-220 AND HIS-490</scope>
    <source>
        <strain>cv. RLD</strain>
    </source>
</reference>
<reference key="2">
    <citation type="journal article" date="2011" name="Science">
        <title>Pathogen effectors target Arabidopsis EDS1 and alter its interactions with immune regulators.</title>
        <authorList>
            <person name="Bhattacharjee S."/>
            <person name="Halane M.K."/>
            <person name="Kim S.H."/>
            <person name="Gassmann W."/>
        </authorList>
    </citation>
    <scope>INTERACTION WITH EDS1</scope>
</reference>
<accession>P0DKH6</accession>
<evidence type="ECO:0000250" key="1">
    <source>
        <dbReference type="UniProtKB" id="O23530"/>
    </source>
</evidence>
<evidence type="ECO:0000255" key="2"/>
<evidence type="ECO:0000255" key="3">
    <source>
        <dbReference type="PROSITE-ProRule" id="PRU00204"/>
    </source>
</evidence>
<evidence type="ECO:0000269" key="4">
    <source>
    </source>
</evidence>
<evidence type="ECO:0000269" key="5">
    <source>
    </source>
</evidence>
<evidence type="ECO:0000303" key="6">
    <source>
    </source>
</evidence>
<evidence type="ECO:0000305" key="7">
    <source>
    </source>
</evidence>
<organism>
    <name type="scientific">Arabidopsis thaliana</name>
    <name type="common">Mouse-ear cress</name>
    <dbReference type="NCBI Taxonomy" id="3702"/>
    <lineage>
        <taxon>Eukaryota</taxon>
        <taxon>Viridiplantae</taxon>
        <taxon>Streptophyta</taxon>
        <taxon>Embryophyta</taxon>
        <taxon>Tracheophyta</taxon>
        <taxon>Spermatophyta</taxon>
        <taxon>Magnoliopsida</taxon>
        <taxon>eudicotyledons</taxon>
        <taxon>Gunneridae</taxon>
        <taxon>Pentapetalae</taxon>
        <taxon>rosids</taxon>
        <taxon>malvids</taxon>
        <taxon>Brassicales</taxon>
        <taxon>Brassicaceae</taxon>
        <taxon>Camelineae</taxon>
        <taxon>Arabidopsis</taxon>
    </lineage>
</organism>
<feature type="chain" id="PRO_0000431369" description="Disease resistance protein RPS6">
    <location>
        <begin position="1"/>
        <end position="1127"/>
    </location>
</feature>
<feature type="domain" description="TIR" evidence="3">
    <location>
        <begin position="12"/>
        <end position="176"/>
    </location>
</feature>
<feature type="repeat" description="LRR 1" evidence="2">
    <location>
        <begin position="197"/>
        <end position="221"/>
    </location>
</feature>
<feature type="repeat" description="LRR 2" evidence="2">
    <location>
        <begin position="540"/>
        <end position="563"/>
    </location>
</feature>
<feature type="repeat" description="LRR 3" evidence="2">
    <location>
        <begin position="587"/>
        <end position="609"/>
    </location>
</feature>
<feature type="repeat" description="LRR 4" evidence="2">
    <location>
        <begin position="610"/>
        <end position="632"/>
    </location>
</feature>
<feature type="repeat" description="LRR 5" evidence="2">
    <location>
        <begin position="633"/>
        <end position="656"/>
    </location>
</feature>
<feature type="repeat" description="LRR 6" evidence="2">
    <location>
        <begin position="658"/>
        <end position="679"/>
    </location>
</feature>
<feature type="repeat" description="LRR 7" evidence="2">
    <location>
        <begin position="680"/>
        <end position="704"/>
    </location>
</feature>
<feature type="repeat" description="LRR 8" evidence="2">
    <location>
        <begin position="766"/>
        <end position="790"/>
    </location>
</feature>
<feature type="repeat" description="LRR 9" evidence="2">
    <location>
        <begin position="791"/>
        <end position="813"/>
    </location>
</feature>
<feature type="repeat" description="LRR 10" evidence="2">
    <location>
        <begin position="814"/>
        <end position="834"/>
    </location>
</feature>
<feature type="repeat" description="LRR 11" evidence="2">
    <location>
        <begin position="835"/>
        <end position="857"/>
    </location>
</feature>
<feature type="active site" evidence="3">
    <location>
        <position position="87"/>
    </location>
</feature>
<feature type="modified residue" description="N-acetylmethionine" evidence="1">
    <location>
        <position position="1"/>
    </location>
</feature>
<feature type="mutagenesis site" description="In rps6-2; loss of resistance." evidence="4">
    <original>G</original>
    <variation>D</variation>
    <location>
        <position position="220"/>
    </location>
</feature>
<feature type="mutagenesis site" description="In rps6-1; loss of resistance." evidence="4">
    <original>H</original>
    <variation>R</variation>
    <location>
        <position position="490"/>
    </location>
</feature>
<proteinExistence type="evidence at protein level"/>
<sequence>MASSSSSSSRNWSYHVFPSFSGEDVRNTFLSHFLKELDRKLIISFKDNEIERSQSLDPELKHGIRNSRIAVVVFSKTYASSSWCLNELLEIVKCKKEFGQLVIPIFYNLDPSHVRKQTGDFGKIFEKTCRNKTVDEKIRWKEALTDVANILGYHIVTWDNEASMIEEIANDILGKMNISPSNDFEDLVGIEDHITKMSSLLHLESEEVRMVGIWGPSGIGKTTISRALFSRLSCQFQSSVFIDKVFISKSMEVYSGANLVDYNMKLHLQRAFLAEIFDKKDIKIHVGAMEKMVKHRKALIVIDDLDDQDVLDALAGQTQWFGSGSRIIVVTENKHFLRANRIDHIYKVCLPSNALALEMFCRSAFKKNSPPDDFLELSSEVALRAGNLPLGLNVLGSNLRGINKGYWIDMLPRLQGLDGKIGKTLRVSYDGLNNRKDEAIFRHIACIFNGEKVSDIKLLLANSNLDVNIGLKNLVDRSLICERFNTLEMHSLLQELGKEIVRTESNQPGEREFLVDLKDICDVLEHNTGTKKVLGITLDIDETDELHIHESSFKGMHNLLFLKIYTKKLDQKKKVRWHLPERFDYLPSRLRLLRFDRYPSKCLPSNFHPENLVKLQMQQSKLEKLWDGVHSLAGLRNMDLRGSRNLKEIPDLSMATNLETLKLSSCSSLVELPSSIQYLNKLNDLDMSYCDHLETIPSGVNLKSLDRLNLSGCSRLKSFLDIPTNISWLDIGQTADIPSNLRLQNLDELILCERVQLRTPLMTMLSPTLTRLTFSNNPSFVEVPSSIQNLYQLEHLEIMNCRNLVTLPTGINLDSLISLDLSHCSQLKTFPDISTNISDLNLSYTAIEEVPLSIEKLSLLCYLDMNGCSNLLCVSPNISKLKHLERADFSDCVELTEASWNGSSSEMVKLLPADNFSTVKLNFINCFKLDLTALIQNQTFFMQLILTGEEVPSYFTHRTSGDSISLPHISVCQSFFSFRGCTVIDVDSFSTISVSFDIEVCCRFIDRFGNHFDSTDFPGYFITTKLGGHLVVFDCYFPFNEEFTTFLDGQFNYDHVDIQFRLTNDNSQLKLKGCGILLSEDVPSLDNRPCSPNILPGVCEDSALERRSFRTKMRMMRMRLLKKLLNR</sequence>
<comment type="function">
    <text evidence="4">Disease resistance (R) protein that specifically recognizes the hopA1 type III effector avirulence protein from Pseudomonas syringae. Resistance proteins guard the plant against pathogens that contain an appropriate avirulence protein via an indirect interaction with this avirulence protein. That triggers a defense system including the hypersensitive response, which restricts the pathogen growth.</text>
</comment>
<comment type="catalytic activity">
    <reaction evidence="3">
        <text>NAD(+) + H2O = ADP-D-ribose + nicotinamide + H(+)</text>
        <dbReference type="Rhea" id="RHEA:16301"/>
        <dbReference type="ChEBI" id="CHEBI:15377"/>
        <dbReference type="ChEBI" id="CHEBI:15378"/>
        <dbReference type="ChEBI" id="CHEBI:17154"/>
        <dbReference type="ChEBI" id="CHEBI:57540"/>
        <dbReference type="ChEBI" id="CHEBI:57967"/>
        <dbReference type="EC" id="3.2.2.6"/>
    </reaction>
    <physiologicalReaction direction="left-to-right" evidence="3">
        <dbReference type="Rhea" id="RHEA:16302"/>
    </physiologicalReaction>
</comment>
<comment type="subunit">
    <text evidence="5">Interacts with EDS1.</text>
</comment>
<comment type="alternative products">
    <event type="alternative splicing"/>
    <isoform>
        <id>P0DKH6-1</id>
        <name>1</name>
        <sequence type="displayed"/>
    </isoform>
    <text evidence="4">A number of isoforms are produced.</text>
</comment>
<comment type="tissue specificity">
    <text evidence="7">Ubiquitous.</text>
</comment>
<comment type="domain">
    <text evidence="3">The TIR domain mediates NAD(+) hydrolase (NADase) activity. Self-association of TIR domains is required for NADase activity.</text>
</comment>
<comment type="miscellaneous">
    <text evidence="7">Ecotype cv. Columbia does not respond with a hypersensitive response to hopA1.</text>
</comment>
<protein>
    <recommendedName>
        <fullName evidence="6">Disease resistance protein RPS6</fullName>
        <ecNumber evidence="3">3.2.2.6</ecNumber>
    </recommendedName>
    <alternativeName>
        <fullName evidence="6">Resistance to Pseudomonas syringae 6</fullName>
    </alternativeName>
</protein>
<gene>
    <name evidence="6" type="primary">RPS6</name>
</gene>
<dbReference type="EC" id="3.2.2.6" evidence="3"/>
<dbReference type="SMR" id="P0DKH6"/>
<dbReference type="ExpressionAtlas" id="P0DKH6">
    <property type="expression patterns" value="baseline and differential"/>
</dbReference>
<dbReference type="GO" id="GO:0043531">
    <property type="term" value="F:ADP binding"/>
    <property type="evidence" value="ECO:0007669"/>
    <property type="project" value="InterPro"/>
</dbReference>
<dbReference type="GO" id="GO:0061809">
    <property type="term" value="F:NAD+ nucleosidase activity, cyclic ADP-ribose generating"/>
    <property type="evidence" value="ECO:0007669"/>
    <property type="project" value="UniProtKB-EC"/>
</dbReference>
<dbReference type="GO" id="GO:0006952">
    <property type="term" value="P:defense response"/>
    <property type="evidence" value="ECO:0007669"/>
    <property type="project" value="UniProtKB-KW"/>
</dbReference>
<dbReference type="GO" id="GO:0007165">
    <property type="term" value="P:signal transduction"/>
    <property type="evidence" value="ECO:0007669"/>
    <property type="project" value="InterPro"/>
</dbReference>
<dbReference type="FunFam" id="1.10.8.430:FF:000002">
    <property type="entry name" value="Disease resistance protein (TIR-NBS-LRR class)"/>
    <property type="match status" value="1"/>
</dbReference>
<dbReference type="FunFam" id="3.40.50.10140:FF:000007">
    <property type="entry name" value="Disease resistance protein (TIR-NBS-LRR class)"/>
    <property type="match status" value="1"/>
</dbReference>
<dbReference type="FunFam" id="3.40.50.300:FF:001002">
    <property type="entry name" value="Disease resistance protein (TIR-NBS-LRR class)"/>
    <property type="match status" value="1"/>
</dbReference>
<dbReference type="FunFam" id="3.80.10.10:FF:000386">
    <property type="entry name" value="Disease resistance protein RPS4"/>
    <property type="match status" value="1"/>
</dbReference>
<dbReference type="Gene3D" id="1.10.8.430">
    <property type="entry name" value="Helical domain of apoptotic protease-activating factors"/>
    <property type="match status" value="1"/>
</dbReference>
<dbReference type="Gene3D" id="3.40.50.300">
    <property type="entry name" value="P-loop containing nucleotide triphosphate hydrolases"/>
    <property type="match status" value="1"/>
</dbReference>
<dbReference type="Gene3D" id="3.80.10.10">
    <property type="entry name" value="Ribonuclease Inhibitor"/>
    <property type="match status" value="2"/>
</dbReference>
<dbReference type="Gene3D" id="3.40.50.10140">
    <property type="entry name" value="Toll/interleukin-1 receptor homology (TIR) domain"/>
    <property type="match status" value="1"/>
</dbReference>
<dbReference type="InterPro" id="IPR042197">
    <property type="entry name" value="Apaf_helical"/>
</dbReference>
<dbReference type="InterPro" id="IPR044974">
    <property type="entry name" value="Disease_R_plants"/>
</dbReference>
<dbReference type="InterPro" id="IPR011713">
    <property type="entry name" value="Leu-rich_rpt_3"/>
</dbReference>
<dbReference type="InterPro" id="IPR032675">
    <property type="entry name" value="LRR_dom_sf"/>
</dbReference>
<dbReference type="InterPro" id="IPR002182">
    <property type="entry name" value="NB-ARC"/>
</dbReference>
<dbReference type="InterPro" id="IPR027417">
    <property type="entry name" value="P-loop_NTPase"/>
</dbReference>
<dbReference type="InterPro" id="IPR000157">
    <property type="entry name" value="TIR_dom"/>
</dbReference>
<dbReference type="InterPro" id="IPR035897">
    <property type="entry name" value="Toll_tir_struct_dom_sf"/>
</dbReference>
<dbReference type="InterPro" id="IPR036390">
    <property type="entry name" value="WH_DNA-bd_sf"/>
</dbReference>
<dbReference type="PANTHER" id="PTHR11017:SF227">
    <property type="entry name" value="DISEASE RESISTANCE PROTEIN RPS6"/>
    <property type="match status" value="1"/>
</dbReference>
<dbReference type="PANTHER" id="PTHR11017">
    <property type="entry name" value="LEUCINE-RICH REPEAT-CONTAINING PROTEIN"/>
    <property type="match status" value="1"/>
</dbReference>
<dbReference type="Pfam" id="PF07725">
    <property type="entry name" value="LRR_3"/>
    <property type="match status" value="1"/>
</dbReference>
<dbReference type="Pfam" id="PF00931">
    <property type="entry name" value="NB-ARC"/>
    <property type="match status" value="1"/>
</dbReference>
<dbReference type="Pfam" id="PF01582">
    <property type="entry name" value="TIR"/>
    <property type="match status" value="1"/>
</dbReference>
<dbReference type="Pfam" id="PF23282">
    <property type="entry name" value="WHD_ROQ1"/>
    <property type="match status" value="1"/>
</dbReference>
<dbReference type="PRINTS" id="PR00364">
    <property type="entry name" value="DISEASERSIST"/>
</dbReference>
<dbReference type="SMART" id="SM00255">
    <property type="entry name" value="TIR"/>
    <property type="match status" value="1"/>
</dbReference>
<dbReference type="SUPFAM" id="SSF52058">
    <property type="entry name" value="L domain-like"/>
    <property type="match status" value="1"/>
</dbReference>
<dbReference type="SUPFAM" id="SSF52540">
    <property type="entry name" value="P-loop containing nucleoside triphosphate hydrolases"/>
    <property type="match status" value="1"/>
</dbReference>
<dbReference type="SUPFAM" id="SSF52200">
    <property type="entry name" value="Toll/Interleukin receptor TIR domain"/>
    <property type="match status" value="1"/>
</dbReference>
<dbReference type="SUPFAM" id="SSF46785">
    <property type="entry name" value="Winged helix' DNA-binding domain"/>
    <property type="match status" value="1"/>
</dbReference>
<dbReference type="PROSITE" id="PS50104">
    <property type="entry name" value="TIR"/>
    <property type="match status" value="1"/>
</dbReference>